<protein>
    <recommendedName>
        <fullName evidence="1">Small ribosomal subunit protein bS21</fullName>
    </recommendedName>
    <alternativeName>
        <fullName>30S ribosomal protein S21</fullName>
    </alternativeName>
</protein>
<organism>
    <name type="scientific">Treponema pallidum (strain Nichols)</name>
    <dbReference type="NCBI Taxonomy" id="243276"/>
    <lineage>
        <taxon>Bacteria</taxon>
        <taxon>Pseudomonadati</taxon>
        <taxon>Spirochaetota</taxon>
        <taxon>Spirochaetia</taxon>
        <taxon>Spirochaetales</taxon>
        <taxon>Treponemataceae</taxon>
        <taxon>Treponema</taxon>
    </lineage>
</organism>
<accession>O83739</accession>
<proteinExistence type="inferred from homology"/>
<dbReference type="EMBL" id="AE000520">
    <property type="protein sequence ID" value="AAC65725.1"/>
    <property type="molecule type" value="Genomic_DNA"/>
</dbReference>
<dbReference type="PIR" id="A71285">
    <property type="entry name" value="A71285"/>
</dbReference>
<dbReference type="RefSeq" id="WP_010882203.1">
    <property type="nucleotide sequence ID" value="NC_021490.2"/>
</dbReference>
<dbReference type="SMR" id="O83739"/>
<dbReference type="STRING" id="243276.TP_0758"/>
<dbReference type="EnsemblBacteria" id="AAC65725">
    <property type="protein sequence ID" value="AAC65725"/>
    <property type="gene ID" value="TP_0758"/>
</dbReference>
<dbReference type="GeneID" id="93876525"/>
<dbReference type="KEGG" id="tpa:TP_0758"/>
<dbReference type="KEGG" id="tpw:TPANIC_0758"/>
<dbReference type="eggNOG" id="COG0828">
    <property type="taxonomic scope" value="Bacteria"/>
</dbReference>
<dbReference type="HOGENOM" id="CLU_159258_1_2_12"/>
<dbReference type="OrthoDB" id="9799244at2"/>
<dbReference type="Proteomes" id="UP000000811">
    <property type="component" value="Chromosome"/>
</dbReference>
<dbReference type="GO" id="GO:1990904">
    <property type="term" value="C:ribonucleoprotein complex"/>
    <property type="evidence" value="ECO:0007669"/>
    <property type="project" value="UniProtKB-KW"/>
</dbReference>
<dbReference type="GO" id="GO:0005840">
    <property type="term" value="C:ribosome"/>
    <property type="evidence" value="ECO:0007669"/>
    <property type="project" value="UniProtKB-KW"/>
</dbReference>
<dbReference type="GO" id="GO:0003735">
    <property type="term" value="F:structural constituent of ribosome"/>
    <property type="evidence" value="ECO:0007669"/>
    <property type="project" value="InterPro"/>
</dbReference>
<dbReference type="GO" id="GO:0006412">
    <property type="term" value="P:translation"/>
    <property type="evidence" value="ECO:0007669"/>
    <property type="project" value="UniProtKB-UniRule"/>
</dbReference>
<dbReference type="Gene3D" id="1.20.5.1150">
    <property type="entry name" value="Ribosomal protein S8"/>
    <property type="match status" value="1"/>
</dbReference>
<dbReference type="HAMAP" id="MF_00358">
    <property type="entry name" value="Ribosomal_bS21"/>
    <property type="match status" value="1"/>
</dbReference>
<dbReference type="InterPro" id="IPR001911">
    <property type="entry name" value="Ribosomal_bS21"/>
</dbReference>
<dbReference type="InterPro" id="IPR018278">
    <property type="entry name" value="Ribosomal_bS21_CS"/>
</dbReference>
<dbReference type="InterPro" id="IPR038380">
    <property type="entry name" value="Ribosomal_bS21_sf"/>
</dbReference>
<dbReference type="NCBIfam" id="TIGR00030">
    <property type="entry name" value="S21p"/>
    <property type="match status" value="1"/>
</dbReference>
<dbReference type="PANTHER" id="PTHR21109">
    <property type="entry name" value="MITOCHONDRIAL 28S RIBOSOMAL PROTEIN S21"/>
    <property type="match status" value="1"/>
</dbReference>
<dbReference type="PANTHER" id="PTHR21109:SF22">
    <property type="entry name" value="SMALL RIBOSOMAL SUBUNIT PROTEIN BS21"/>
    <property type="match status" value="1"/>
</dbReference>
<dbReference type="Pfam" id="PF01165">
    <property type="entry name" value="Ribosomal_S21"/>
    <property type="match status" value="1"/>
</dbReference>
<dbReference type="PRINTS" id="PR00976">
    <property type="entry name" value="RIBOSOMALS21"/>
</dbReference>
<dbReference type="PROSITE" id="PS01181">
    <property type="entry name" value="RIBOSOMAL_S21"/>
    <property type="match status" value="1"/>
</dbReference>
<gene>
    <name type="primary">rpsU</name>
    <name type="ordered locus">TP_0758</name>
</gene>
<sequence>MAHITVDDSENLEKAIKRFKRQVEKEGIIREWKKKEFYEKPSTLLNRKKKALRRKLMKKGRKVSDSRLY</sequence>
<feature type="chain" id="PRO_0000178397" description="Small ribosomal subunit protein bS21">
    <location>
        <begin position="1"/>
        <end position="69"/>
    </location>
</feature>
<comment type="similarity">
    <text evidence="1">Belongs to the bacterial ribosomal protein bS21 family.</text>
</comment>
<reference key="1">
    <citation type="journal article" date="1998" name="Science">
        <title>Complete genome sequence of Treponema pallidum, the syphilis spirochete.</title>
        <authorList>
            <person name="Fraser C.M."/>
            <person name="Norris S.J."/>
            <person name="Weinstock G.M."/>
            <person name="White O."/>
            <person name="Sutton G.G."/>
            <person name="Dodson R.J."/>
            <person name="Gwinn M.L."/>
            <person name="Hickey E.K."/>
            <person name="Clayton R.A."/>
            <person name="Ketchum K.A."/>
            <person name="Sodergren E."/>
            <person name="Hardham J.M."/>
            <person name="McLeod M.P."/>
            <person name="Salzberg S.L."/>
            <person name="Peterson J.D."/>
            <person name="Khalak H.G."/>
            <person name="Richardson D.L."/>
            <person name="Howell J.K."/>
            <person name="Chidambaram M."/>
            <person name="Utterback T.R."/>
            <person name="McDonald L.A."/>
            <person name="Artiach P."/>
            <person name="Bowman C."/>
            <person name="Cotton M.D."/>
            <person name="Fujii C."/>
            <person name="Garland S.A."/>
            <person name="Hatch B."/>
            <person name="Horst K."/>
            <person name="Roberts K.M."/>
            <person name="Sandusky M."/>
            <person name="Weidman J.F."/>
            <person name="Smith H.O."/>
            <person name="Venter J.C."/>
        </authorList>
    </citation>
    <scope>NUCLEOTIDE SEQUENCE [LARGE SCALE GENOMIC DNA]</scope>
    <source>
        <strain>Nichols</strain>
    </source>
</reference>
<keyword id="KW-1185">Reference proteome</keyword>
<keyword id="KW-0687">Ribonucleoprotein</keyword>
<keyword id="KW-0689">Ribosomal protein</keyword>
<name>RS21_TREPA</name>
<evidence type="ECO:0000305" key="1"/>